<name>ATPA_OENGL</name>
<proteinExistence type="inferred from homology"/>
<dbReference type="EC" id="7.1.2.2" evidence="1"/>
<dbReference type="EMBL" id="EU262890">
    <property type="protein sequence ID" value="ABX10043.1"/>
    <property type="molecule type" value="Genomic_DNA"/>
</dbReference>
<dbReference type="RefSeq" id="YP_001687289.1">
    <property type="nucleotide sequence ID" value="NC_010360.2"/>
</dbReference>
<dbReference type="SMR" id="B0Z550"/>
<dbReference type="GeneID" id="5955316"/>
<dbReference type="GO" id="GO:0009535">
    <property type="term" value="C:chloroplast thylakoid membrane"/>
    <property type="evidence" value="ECO:0007669"/>
    <property type="project" value="UniProtKB-SubCell"/>
</dbReference>
<dbReference type="GO" id="GO:0045259">
    <property type="term" value="C:proton-transporting ATP synthase complex"/>
    <property type="evidence" value="ECO:0007669"/>
    <property type="project" value="UniProtKB-KW"/>
</dbReference>
<dbReference type="GO" id="GO:0043531">
    <property type="term" value="F:ADP binding"/>
    <property type="evidence" value="ECO:0007669"/>
    <property type="project" value="TreeGrafter"/>
</dbReference>
<dbReference type="GO" id="GO:0005524">
    <property type="term" value="F:ATP binding"/>
    <property type="evidence" value="ECO:0007669"/>
    <property type="project" value="UniProtKB-UniRule"/>
</dbReference>
<dbReference type="GO" id="GO:0046933">
    <property type="term" value="F:proton-transporting ATP synthase activity, rotational mechanism"/>
    <property type="evidence" value="ECO:0007669"/>
    <property type="project" value="UniProtKB-UniRule"/>
</dbReference>
<dbReference type="CDD" id="cd18113">
    <property type="entry name" value="ATP-synt_F1_alpha_C"/>
    <property type="match status" value="1"/>
</dbReference>
<dbReference type="CDD" id="cd18116">
    <property type="entry name" value="ATP-synt_F1_alpha_N"/>
    <property type="match status" value="1"/>
</dbReference>
<dbReference type="CDD" id="cd01132">
    <property type="entry name" value="F1-ATPase_alpha_CD"/>
    <property type="match status" value="1"/>
</dbReference>
<dbReference type="FunFam" id="1.20.150.20:FF:000001">
    <property type="entry name" value="ATP synthase subunit alpha"/>
    <property type="match status" value="1"/>
</dbReference>
<dbReference type="FunFam" id="2.40.30.20:FF:000001">
    <property type="entry name" value="ATP synthase subunit alpha"/>
    <property type="match status" value="1"/>
</dbReference>
<dbReference type="FunFam" id="3.40.50.300:FF:000002">
    <property type="entry name" value="ATP synthase subunit alpha"/>
    <property type="match status" value="1"/>
</dbReference>
<dbReference type="Gene3D" id="2.40.30.20">
    <property type="match status" value="1"/>
</dbReference>
<dbReference type="Gene3D" id="1.20.150.20">
    <property type="entry name" value="ATP synthase alpha/beta chain, C-terminal domain"/>
    <property type="match status" value="1"/>
</dbReference>
<dbReference type="Gene3D" id="3.40.50.300">
    <property type="entry name" value="P-loop containing nucleotide triphosphate hydrolases"/>
    <property type="match status" value="1"/>
</dbReference>
<dbReference type="HAMAP" id="MF_01346">
    <property type="entry name" value="ATP_synth_alpha_bact"/>
    <property type="match status" value="1"/>
</dbReference>
<dbReference type="InterPro" id="IPR023366">
    <property type="entry name" value="ATP_synth_asu-like_sf"/>
</dbReference>
<dbReference type="InterPro" id="IPR000793">
    <property type="entry name" value="ATP_synth_asu_C"/>
</dbReference>
<dbReference type="InterPro" id="IPR038376">
    <property type="entry name" value="ATP_synth_asu_C_sf"/>
</dbReference>
<dbReference type="InterPro" id="IPR033732">
    <property type="entry name" value="ATP_synth_F1_a_nt-bd_dom"/>
</dbReference>
<dbReference type="InterPro" id="IPR005294">
    <property type="entry name" value="ATP_synth_F1_asu"/>
</dbReference>
<dbReference type="InterPro" id="IPR020003">
    <property type="entry name" value="ATPase_a/bsu_AS"/>
</dbReference>
<dbReference type="InterPro" id="IPR004100">
    <property type="entry name" value="ATPase_F1/V1/A1_a/bsu_N"/>
</dbReference>
<dbReference type="InterPro" id="IPR036121">
    <property type="entry name" value="ATPase_F1/V1/A1_a/bsu_N_sf"/>
</dbReference>
<dbReference type="InterPro" id="IPR000194">
    <property type="entry name" value="ATPase_F1/V1/A1_a/bsu_nucl-bd"/>
</dbReference>
<dbReference type="InterPro" id="IPR027417">
    <property type="entry name" value="P-loop_NTPase"/>
</dbReference>
<dbReference type="NCBIfam" id="TIGR00962">
    <property type="entry name" value="atpA"/>
    <property type="match status" value="1"/>
</dbReference>
<dbReference type="NCBIfam" id="NF009884">
    <property type="entry name" value="PRK13343.1"/>
    <property type="match status" value="1"/>
</dbReference>
<dbReference type="PANTHER" id="PTHR48082">
    <property type="entry name" value="ATP SYNTHASE SUBUNIT ALPHA, MITOCHONDRIAL"/>
    <property type="match status" value="1"/>
</dbReference>
<dbReference type="PANTHER" id="PTHR48082:SF2">
    <property type="entry name" value="ATP SYNTHASE SUBUNIT ALPHA, MITOCHONDRIAL"/>
    <property type="match status" value="1"/>
</dbReference>
<dbReference type="Pfam" id="PF00006">
    <property type="entry name" value="ATP-synt_ab"/>
    <property type="match status" value="1"/>
</dbReference>
<dbReference type="Pfam" id="PF00306">
    <property type="entry name" value="ATP-synt_ab_C"/>
    <property type="match status" value="1"/>
</dbReference>
<dbReference type="Pfam" id="PF02874">
    <property type="entry name" value="ATP-synt_ab_N"/>
    <property type="match status" value="1"/>
</dbReference>
<dbReference type="PIRSF" id="PIRSF039088">
    <property type="entry name" value="F_ATPase_subunit_alpha"/>
    <property type="match status" value="1"/>
</dbReference>
<dbReference type="SUPFAM" id="SSF47917">
    <property type="entry name" value="C-terminal domain of alpha and beta subunits of F1 ATP synthase"/>
    <property type="match status" value="1"/>
</dbReference>
<dbReference type="SUPFAM" id="SSF50615">
    <property type="entry name" value="N-terminal domain of alpha and beta subunits of F1 ATP synthase"/>
    <property type="match status" value="1"/>
</dbReference>
<dbReference type="SUPFAM" id="SSF52540">
    <property type="entry name" value="P-loop containing nucleoside triphosphate hydrolases"/>
    <property type="match status" value="1"/>
</dbReference>
<dbReference type="PROSITE" id="PS00152">
    <property type="entry name" value="ATPASE_ALPHA_BETA"/>
    <property type="match status" value="1"/>
</dbReference>
<accession>B0Z550</accession>
<comment type="function">
    <text evidence="1">Produces ATP from ADP in the presence of a proton gradient across the membrane. The alpha chain is a regulatory subunit.</text>
</comment>
<comment type="catalytic activity">
    <reaction evidence="1">
        <text>ATP + H2O + 4 H(+)(in) = ADP + phosphate + 5 H(+)(out)</text>
        <dbReference type="Rhea" id="RHEA:57720"/>
        <dbReference type="ChEBI" id="CHEBI:15377"/>
        <dbReference type="ChEBI" id="CHEBI:15378"/>
        <dbReference type="ChEBI" id="CHEBI:30616"/>
        <dbReference type="ChEBI" id="CHEBI:43474"/>
        <dbReference type="ChEBI" id="CHEBI:456216"/>
        <dbReference type="EC" id="7.1.2.2"/>
    </reaction>
</comment>
<comment type="subunit">
    <text evidence="1">F-type ATPases have 2 components, CF(1) - the catalytic core - and CF(0) - the membrane proton channel. CF(1) has five subunits: alpha(3), beta(3), gamma(1), delta(1), epsilon(1). CF(0) has four main subunits: a, b, b' and c.</text>
</comment>
<comment type="subcellular location">
    <subcellularLocation>
        <location evidence="1">Plastid</location>
        <location evidence="1">Chloroplast thylakoid membrane</location>
        <topology evidence="1">Peripheral membrane protein</topology>
    </subcellularLocation>
</comment>
<comment type="similarity">
    <text evidence="1">Belongs to the ATPase alpha/beta chains family.</text>
</comment>
<reference key="1">
    <citation type="journal article" date="2008" name="Nucleic Acids Res.">
        <title>The complete nucleotide sequences of the five genetically distinct plastid genomes of Oenothera, subsection Oenothera: I. Sequence evaluation and plastome evolution.</title>
        <authorList>
            <person name="Greiner S."/>
            <person name="Wang X."/>
            <person name="Rauwolf U."/>
            <person name="Silber M.V."/>
            <person name="Mayer K."/>
            <person name="Meurer J."/>
            <person name="Haberer G."/>
            <person name="Herrmann R.G."/>
        </authorList>
    </citation>
    <scope>NUCLEOTIDE SEQUENCE [LARGE SCALE GENOMIC DNA]</scope>
    <source>
        <strain>cv. Rr-lamarckiana Sweden</strain>
    </source>
</reference>
<organism>
    <name type="scientific">Oenothera glazioviana</name>
    <name type="common">Large-flowered evening primrose</name>
    <name type="synonym">Oenothera erythrosepala</name>
    <dbReference type="NCBI Taxonomy" id="482428"/>
    <lineage>
        <taxon>Eukaryota</taxon>
        <taxon>Viridiplantae</taxon>
        <taxon>Streptophyta</taxon>
        <taxon>Embryophyta</taxon>
        <taxon>Tracheophyta</taxon>
        <taxon>Spermatophyta</taxon>
        <taxon>Magnoliopsida</taxon>
        <taxon>eudicotyledons</taxon>
        <taxon>Gunneridae</taxon>
        <taxon>Pentapetalae</taxon>
        <taxon>rosids</taxon>
        <taxon>malvids</taxon>
        <taxon>Myrtales</taxon>
        <taxon>Onagraceae</taxon>
        <taxon>Onagroideae</taxon>
        <taxon>Onagreae</taxon>
        <taxon>Oenothera</taxon>
    </lineage>
</organism>
<keyword id="KW-0066">ATP synthesis</keyword>
<keyword id="KW-0067">ATP-binding</keyword>
<keyword id="KW-0139">CF(1)</keyword>
<keyword id="KW-0150">Chloroplast</keyword>
<keyword id="KW-0375">Hydrogen ion transport</keyword>
<keyword id="KW-0406">Ion transport</keyword>
<keyword id="KW-0472">Membrane</keyword>
<keyword id="KW-0547">Nucleotide-binding</keyword>
<keyword id="KW-0934">Plastid</keyword>
<keyword id="KW-0793">Thylakoid</keyword>
<keyword id="KW-1278">Translocase</keyword>
<keyword id="KW-0813">Transport</keyword>
<feature type="chain" id="PRO_0000339102" description="ATP synthase subunit alpha, chloroplastic">
    <location>
        <begin position="1"/>
        <end position="507"/>
    </location>
</feature>
<feature type="binding site" evidence="1">
    <location>
        <begin position="170"/>
        <end position="177"/>
    </location>
    <ligand>
        <name>ATP</name>
        <dbReference type="ChEBI" id="CHEBI:30616"/>
    </ligand>
</feature>
<feature type="site" description="Required for activity" evidence="1">
    <location>
        <position position="363"/>
    </location>
</feature>
<evidence type="ECO:0000255" key="1">
    <source>
        <dbReference type="HAMAP-Rule" id="MF_01346"/>
    </source>
</evidence>
<gene>
    <name evidence="1" type="primary">atpA</name>
</gene>
<sequence length="507" mass="55473">MATIRADEISNIIRERIEQYNREVKIVNTGTVLQVGDGIARIYGLDEVMAGELVEFEEGTIGIALNLESKNVGVVLMGDGLLIQEGSSVKATGRIAQIPVSEAYLGRVINALAKPIDGRGEISSSESRLIESPAPGIISRRSVYEPLQTGLIAIDAMIPIGRGQRELIIGDRQTGKTAVATDTILNQQGNNVICVYVAIGQKASSVAQVVNALQERGAMEYTIVVAEAADSPATLQYLAPYTGAALAEYFMYRERHTLIIYDDPSKQAQAYRQMSLLLRRPPGREAYPGDVFYLHSRLLERAAKLSSRLGEGSMTALPIVETQSGDVSAYIPTNVISITDGQIFLSADLFNAGIRPAINVGISVSRVGSAAQIKAMKQVAGKLKLELAQFAELEAFAQFSSDLDKATQNQLARGQRLRELLKQSQAKPLTVAEQILTIYTGTNGYLDSFEIAQVRKFLDELRDYVKTRKPQFEEIISSTKIFTEEAQALLKDAIQEQKELFLVQEKV</sequence>
<protein>
    <recommendedName>
        <fullName evidence="1">ATP synthase subunit alpha, chloroplastic</fullName>
        <ecNumber evidence="1">7.1.2.2</ecNumber>
    </recommendedName>
    <alternativeName>
        <fullName evidence="1">ATP synthase F1 sector subunit alpha</fullName>
    </alternativeName>
    <alternativeName>
        <fullName evidence="1">F-ATPase subunit alpha</fullName>
    </alternativeName>
</protein>
<geneLocation type="chloroplast"/>